<reference key="1">
    <citation type="submission" date="2009-02" db="EMBL/GenBank/DDBJ databases">
        <title>Vibrio splendidus str. LGP32 complete genome.</title>
        <authorList>
            <person name="Mazel D."/>
            <person name="Le Roux F."/>
        </authorList>
    </citation>
    <scope>NUCLEOTIDE SEQUENCE [LARGE SCALE GENOMIC DNA]</scope>
    <source>
        <strain>LGP32</strain>
    </source>
</reference>
<gene>
    <name evidence="1" type="primary">pepT</name>
    <name type="ordered locus">VS_II1148</name>
</gene>
<name>PEPT_VIBA3</name>
<evidence type="ECO:0000255" key="1">
    <source>
        <dbReference type="HAMAP-Rule" id="MF_00550"/>
    </source>
</evidence>
<proteinExistence type="inferred from homology"/>
<comment type="function">
    <text evidence="1">Cleaves the N-terminal amino acid of tripeptides.</text>
</comment>
<comment type="catalytic activity">
    <reaction evidence="1">
        <text>Release of the N-terminal residue from a tripeptide.</text>
        <dbReference type="EC" id="3.4.11.4"/>
    </reaction>
</comment>
<comment type="cofactor">
    <cofactor evidence="1">
        <name>Zn(2+)</name>
        <dbReference type="ChEBI" id="CHEBI:29105"/>
    </cofactor>
    <text evidence="1">Binds 2 Zn(2+) ions per subunit.</text>
</comment>
<comment type="subcellular location">
    <subcellularLocation>
        <location evidence="1">Cytoplasm</location>
    </subcellularLocation>
</comment>
<comment type="similarity">
    <text evidence="1">Belongs to the peptidase M20B family.</text>
</comment>
<sequence>MEKLVERFLNYVTFDTKSDPSNQQCPSSPGQITFAEALKLELVALDLVDVSLDDNGYLMAKLPSNVDYPVPAIGFVAHMDTAPDASGANVKPQVIKDYRGGTIELGESGESLSPSQYPDLDSLHGHDLITTDGTTLLGADNKAGIAEIISAIAYLKANPDIKHGDICIGFTPDEEIGRGANLFDVEKFGAEWAYTIDGGPVGELEFENFNATSADVICHGVNVHPGTAKGKMVNSMNIAAQFQLMMPAQETPECTEGYEGFYHLKSAEMGVARSELGYIIRDFEREGVEARKAVMQQKVDELNERLEKGRVELVLTDSYFNMKEMVEPHQHIIELAKQAMIECDVEPMIKPIRGGTDGARLSFMGLPCPNIFTGGYNFHGIHEFITIQGMEQAVKVIVELSQRTATHYQK</sequence>
<dbReference type="EC" id="3.4.11.4" evidence="1"/>
<dbReference type="EMBL" id="FM954973">
    <property type="protein sequence ID" value="CAV27079.1"/>
    <property type="molecule type" value="Genomic_DNA"/>
</dbReference>
<dbReference type="SMR" id="B7VSC8"/>
<dbReference type="STRING" id="575788.VS_II1148"/>
<dbReference type="MEROPS" id="M20.003"/>
<dbReference type="KEGG" id="vsp:VS_II1148"/>
<dbReference type="PATRIC" id="fig|575788.5.peg.1082"/>
<dbReference type="eggNOG" id="COG2195">
    <property type="taxonomic scope" value="Bacteria"/>
</dbReference>
<dbReference type="HOGENOM" id="CLU_053676_0_0_6"/>
<dbReference type="Proteomes" id="UP000009100">
    <property type="component" value="Chromosome 2"/>
</dbReference>
<dbReference type="GO" id="GO:0005829">
    <property type="term" value="C:cytosol"/>
    <property type="evidence" value="ECO:0007669"/>
    <property type="project" value="TreeGrafter"/>
</dbReference>
<dbReference type="GO" id="GO:0008237">
    <property type="term" value="F:metallopeptidase activity"/>
    <property type="evidence" value="ECO:0007669"/>
    <property type="project" value="UniProtKB-KW"/>
</dbReference>
<dbReference type="GO" id="GO:0045148">
    <property type="term" value="F:tripeptide aminopeptidase activity"/>
    <property type="evidence" value="ECO:0007669"/>
    <property type="project" value="UniProtKB-UniRule"/>
</dbReference>
<dbReference type="GO" id="GO:0008270">
    <property type="term" value="F:zinc ion binding"/>
    <property type="evidence" value="ECO:0007669"/>
    <property type="project" value="UniProtKB-UniRule"/>
</dbReference>
<dbReference type="GO" id="GO:0043171">
    <property type="term" value="P:peptide catabolic process"/>
    <property type="evidence" value="ECO:0007669"/>
    <property type="project" value="UniProtKB-UniRule"/>
</dbReference>
<dbReference type="GO" id="GO:0006508">
    <property type="term" value="P:proteolysis"/>
    <property type="evidence" value="ECO:0007669"/>
    <property type="project" value="UniProtKB-UniRule"/>
</dbReference>
<dbReference type="CDD" id="cd03892">
    <property type="entry name" value="M20_peptT"/>
    <property type="match status" value="1"/>
</dbReference>
<dbReference type="FunFam" id="3.30.70.360:FF:000002">
    <property type="entry name" value="Peptidase T"/>
    <property type="match status" value="1"/>
</dbReference>
<dbReference type="Gene3D" id="3.30.70.360">
    <property type="match status" value="1"/>
</dbReference>
<dbReference type="Gene3D" id="3.40.630.10">
    <property type="entry name" value="Zn peptidases"/>
    <property type="match status" value="1"/>
</dbReference>
<dbReference type="HAMAP" id="MF_00550">
    <property type="entry name" value="Aminopeptidase_M20"/>
    <property type="match status" value="1"/>
</dbReference>
<dbReference type="InterPro" id="IPR001261">
    <property type="entry name" value="ArgE/DapE_CS"/>
</dbReference>
<dbReference type="InterPro" id="IPR036264">
    <property type="entry name" value="Bact_exopeptidase_dim_dom"/>
</dbReference>
<dbReference type="InterPro" id="IPR002933">
    <property type="entry name" value="Peptidase_M20"/>
</dbReference>
<dbReference type="InterPro" id="IPR011650">
    <property type="entry name" value="Peptidase_M20_dimer"/>
</dbReference>
<dbReference type="InterPro" id="IPR010161">
    <property type="entry name" value="Peptidase_M20B"/>
</dbReference>
<dbReference type="NCBIfam" id="TIGR01882">
    <property type="entry name" value="peptidase-T"/>
    <property type="match status" value="1"/>
</dbReference>
<dbReference type="NCBIfam" id="NF003976">
    <property type="entry name" value="PRK05469.1"/>
    <property type="match status" value="1"/>
</dbReference>
<dbReference type="NCBIfam" id="NF009920">
    <property type="entry name" value="PRK13381.1"/>
    <property type="match status" value="1"/>
</dbReference>
<dbReference type="PANTHER" id="PTHR42994">
    <property type="entry name" value="PEPTIDASE T"/>
    <property type="match status" value="1"/>
</dbReference>
<dbReference type="PANTHER" id="PTHR42994:SF1">
    <property type="entry name" value="PEPTIDASE T"/>
    <property type="match status" value="1"/>
</dbReference>
<dbReference type="Pfam" id="PF07687">
    <property type="entry name" value="M20_dimer"/>
    <property type="match status" value="1"/>
</dbReference>
<dbReference type="Pfam" id="PF01546">
    <property type="entry name" value="Peptidase_M20"/>
    <property type="match status" value="1"/>
</dbReference>
<dbReference type="PIRSF" id="PIRSF037215">
    <property type="entry name" value="Peptidase_M20B"/>
    <property type="match status" value="1"/>
</dbReference>
<dbReference type="SUPFAM" id="SSF55031">
    <property type="entry name" value="Bacterial exopeptidase dimerisation domain"/>
    <property type="match status" value="1"/>
</dbReference>
<dbReference type="SUPFAM" id="SSF53187">
    <property type="entry name" value="Zn-dependent exopeptidases"/>
    <property type="match status" value="1"/>
</dbReference>
<dbReference type="PROSITE" id="PS00758">
    <property type="entry name" value="ARGE_DAPE_CPG2_1"/>
    <property type="match status" value="1"/>
</dbReference>
<dbReference type="PROSITE" id="PS00759">
    <property type="entry name" value="ARGE_DAPE_CPG2_2"/>
    <property type="match status" value="1"/>
</dbReference>
<keyword id="KW-0031">Aminopeptidase</keyword>
<keyword id="KW-0963">Cytoplasm</keyword>
<keyword id="KW-0378">Hydrolase</keyword>
<keyword id="KW-0479">Metal-binding</keyword>
<keyword id="KW-0482">Metalloprotease</keyword>
<keyword id="KW-0645">Protease</keyword>
<keyword id="KW-0862">Zinc</keyword>
<accession>B7VSC8</accession>
<feature type="chain" id="PRO_1000200906" description="Peptidase T">
    <location>
        <begin position="1"/>
        <end position="410"/>
    </location>
</feature>
<feature type="active site" evidence="1">
    <location>
        <position position="80"/>
    </location>
</feature>
<feature type="active site" description="Proton acceptor" evidence="1">
    <location>
        <position position="174"/>
    </location>
</feature>
<feature type="binding site" evidence="1">
    <location>
        <position position="78"/>
    </location>
    <ligand>
        <name>Zn(2+)</name>
        <dbReference type="ChEBI" id="CHEBI:29105"/>
        <label>1</label>
    </ligand>
</feature>
<feature type="binding site" evidence="1">
    <location>
        <position position="140"/>
    </location>
    <ligand>
        <name>Zn(2+)</name>
        <dbReference type="ChEBI" id="CHEBI:29105"/>
        <label>1</label>
    </ligand>
</feature>
<feature type="binding site" evidence="1">
    <location>
        <position position="140"/>
    </location>
    <ligand>
        <name>Zn(2+)</name>
        <dbReference type="ChEBI" id="CHEBI:29105"/>
        <label>2</label>
    </ligand>
</feature>
<feature type="binding site" evidence="1">
    <location>
        <position position="175"/>
    </location>
    <ligand>
        <name>Zn(2+)</name>
        <dbReference type="ChEBI" id="CHEBI:29105"/>
        <label>2</label>
    </ligand>
</feature>
<feature type="binding site" evidence="1">
    <location>
        <position position="197"/>
    </location>
    <ligand>
        <name>Zn(2+)</name>
        <dbReference type="ChEBI" id="CHEBI:29105"/>
        <label>1</label>
    </ligand>
</feature>
<feature type="binding site" evidence="1">
    <location>
        <position position="379"/>
    </location>
    <ligand>
        <name>Zn(2+)</name>
        <dbReference type="ChEBI" id="CHEBI:29105"/>
        <label>2</label>
    </ligand>
</feature>
<protein>
    <recommendedName>
        <fullName evidence="1">Peptidase T</fullName>
        <ecNumber evidence="1">3.4.11.4</ecNumber>
    </recommendedName>
    <alternativeName>
        <fullName evidence="1">Aminotripeptidase</fullName>
        <shortName evidence="1">Tripeptidase</shortName>
    </alternativeName>
    <alternativeName>
        <fullName evidence="1">Tripeptide aminopeptidase</fullName>
    </alternativeName>
</protein>
<organism>
    <name type="scientific">Vibrio atlanticus (strain LGP32)</name>
    <name type="common">Vibrio splendidus (strain Mel32)</name>
    <dbReference type="NCBI Taxonomy" id="575788"/>
    <lineage>
        <taxon>Bacteria</taxon>
        <taxon>Pseudomonadati</taxon>
        <taxon>Pseudomonadota</taxon>
        <taxon>Gammaproteobacteria</taxon>
        <taxon>Vibrionales</taxon>
        <taxon>Vibrionaceae</taxon>
        <taxon>Vibrio</taxon>
    </lineage>
</organism>